<sequence length="371" mass="41633">MKLDHLVLKNYRNYAAVDTTFSPEINVLIGANAQGKTNLLESIYVLALARSHRTNNDKELIRFGSEFARVSGQVSRQSGSHQLELIISHQGKRARIDRIEQPKLSQYLGHFNVILFAPEDLAIVKGSPAGRRRFIDMEFGQMSPKYLYNLSQYKTFLKQRNAYLKQLKYHQAKDLVYLDVLTDSLAAFGAELITARAKLLETMSDYAATIQQDITKGRESLHFSYQTQVDPSLRGDSEQVYTALGEMFAKQQAREIEQGTSLVGPQRDDVLFIVNDKDVANFGSQGQQRTTALAVKLAEIDLMKDQTGEYPVLLLDDVLSELDAARQTHLLKAIQTKVQTFLTTTSLEGIQKEIIATPAVFKVDEGTLARA</sequence>
<accession>B3W6Q9</accession>
<comment type="function">
    <text evidence="1">The RecF protein is involved in DNA metabolism; it is required for DNA replication and normal SOS inducibility. RecF binds preferentially to single-stranded, linear DNA. It also seems to bind ATP.</text>
</comment>
<comment type="subcellular location">
    <subcellularLocation>
        <location evidence="1">Cytoplasm</location>
    </subcellularLocation>
</comment>
<comment type="similarity">
    <text evidence="1">Belongs to the RecF family.</text>
</comment>
<reference key="1">
    <citation type="submission" date="2008-06" db="EMBL/GenBank/DDBJ databases">
        <title>Lactobacillus casei BL23 complete genome sequence.</title>
        <authorList>
            <person name="Maze A."/>
            <person name="Boel G."/>
            <person name="Bourand A."/>
            <person name="Loux V."/>
            <person name="Gibrat J.F."/>
            <person name="Zuniga M."/>
            <person name="Hartke A."/>
            <person name="Deutscher J."/>
        </authorList>
    </citation>
    <scope>NUCLEOTIDE SEQUENCE [LARGE SCALE GENOMIC DNA]</scope>
    <source>
        <strain>BL23</strain>
    </source>
</reference>
<organism>
    <name type="scientific">Lacticaseibacillus casei (strain BL23)</name>
    <name type="common">Lactobacillus casei</name>
    <dbReference type="NCBI Taxonomy" id="543734"/>
    <lineage>
        <taxon>Bacteria</taxon>
        <taxon>Bacillati</taxon>
        <taxon>Bacillota</taxon>
        <taxon>Bacilli</taxon>
        <taxon>Lactobacillales</taxon>
        <taxon>Lactobacillaceae</taxon>
        <taxon>Lacticaseibacillus</taxon>
    </lineage>
</organism>
<evidence type="ECO:0000255" key="1">
    <source>
        <dbReference type="HAMAP-Rule" id="MF_00365"/>
    </source>
</evidence>
<dbReference type="EMBL" id="FM177140">
    <property type="protein sequence ID" value="CAQ65136.1"/>
    <property type="molecule type" value="Genomic_DNA"/>
</dbReference>
<dbReference type="SMR" id="B3W6Q9"/>
<dbReference type="KEGG" id="lcb:LCABL_00040"/>
<dbReference type="HOGENOM" id="CLU_040267_0_1_9"/>
<dbReference type="GO" id="GO:0005737">
    <property type="term" value="C:cytoplasm"/>
    <property type="evidence" value="ECO:0007669"/>
    <property type="project" value="UniProtKB-SubCell"/>
</dbReference>
<dbReference type="GO" id="GO:0005524">
    <property type="term" value="F:ATP binding"/>
    <property type="evidence" value="ECO:0007669"/>
    <property type="project" value="UniProtKB-UniRule"/>
</dbReference>
<dbReference type="GO" id="GO:0003697">
    <property type="term" value="F:single-stranded DNA binding"/>
    <property type="evidence" value="ECO:0007669"/>
    <property type="project" value="UniProtKB-UniRule"/>
</dbReference>
<dbReference type="GO" id="GO:0006260">
    <property type="term" value="P:DNA replication"/>
    <property type="evidence" value="ECO:0007669"/>
    <property type="project" value="UniProtKB-UniRule"/>
</dbReference>
<dbReference type="GO" id="GO:0000731">
    <property type="term" value="P:DNA synthesis involved in DNA repair"/>
    <property type="evidence" value="ECO:0007669"/>
    <property type="project" value="TreeGrafter"/>
</dbReference>
<dbReference type="GO" id="GO:0006302">
    <property type="term" value="P:double-strand break repair"/>
    <property type="evidence" value="ECO:0007669"/>
    <property type="project" value="TreeGrafter"/>
</dbReference>
<dbReference type="GO" id="GO:0009432">
    <property type="term" value="P:SOS response"/>
    <property type="evidence" value="ECO:0007669"/>
    <property type="project" value="UniProtKB-UniRule"/>
</dbReference>
<dbReference type="CDD" id="cd03242">
    <property type="entry name" value="ABC_RecF"/>
    <property type="match status" value="1"/>
</dbReference>
<dbReference type="Gene3D" id="3.40.50.300">
    <property type="entry name" value="P-loop containing nucleotide triphosphate hydrolases"/>
    <property type="match status" value="1"/>
</dbReference>
<dbReference type="Gene3D" id="1.20.1050.90">
    <property type="entry name" value="RecF/RecN/SMC, N-terminal domain"/>
    <property type="match status" value="1"/>
</dbReference>
<dbReference type="HAMAP" id="MF_00365">
    <property type="entry name" value="RecF"/>
    <property type="match status" value="1"/>
</dbReference>
<dbReference type="InterPro" id="IPR001238">
    <property type="entry name" value="DNA-binding_RecF"/>
</dbReference>
<dbReference type="InterPro" id="IPR018078">
    <property type="entry name" value="DNA-binding_RecF_CS"/>
</dbReference>
<dbReference type="InterPro" id="IPR027417">
    <property type="entry name" value="P-loop_NTPase"/>
</dbReference>
<dbReference type="InterPro" id="IPR003395">
    <property type="entry name" value="RecF/RecN/SMC_N"/>
</dbReference>
<dbReference type="InterPro" id="IPR042174">
    <property type="entry name" value="RecF_2"/>
</dbReference>
<dbReference type="NCBIfam" id="TIGR00611">
    <property type="entry name" value="recf"/>
    <property type="match status" value="1"/>
</dbReference>
<dbReference type="PANTHER" id="PTHR32182">
    <property type="entry name" value="DNA REPLICATION AND REPAIR PROTEIN RECF"/>
    <property type="match status" value="1"/>
</dbReference>
<dbReference type="PANTHER" id="PTHR32182:SF0">
    <property type="entry name" value="DNA REPLICATION AND REPAIR PROTEIN RECF"/>
    <property type="match status" value="1"/>
</dbReference>
<dbReference type="Pfam" id="PF02463">
    <property type="entry name" value="SMC_N"/>
    <property type="match status" value="1"/>
</dbReference>
<dbReference type="SUPFAM" id="SSF52540">
    <property type="entry name" value="P-loop containing nucleoside triphosphate hydrolases"/>
    <property type="match status" value="1"/>
</dbReference>
<dbReference type="PROSITE" id="PS00617">
    <property type="entry name" value="RECF_1"/>
    <property type="match status" value="1"/>
</dbReference>
<dbReference type="PROSITE" id="PS00618">
    <property type="entry name" value="RECF_2"/>
    <property type="match status" value="1"/>
</dbReference>
<keyword id="KW-0067">ATP-binding</keyword>
<keyword id="KW-0963">Cytoplasm</keyword>
<keyword id="KW-0227">DNA damage</keyword>
<keyword id="KW-0234">DNA repair</keyword>
<keyword id="KW-0235">DNA replication</keyword>
<keyword id="KW-0238">DNA-binding</keyword>
<keyword id="KW-0547">Nucleotide-binding</keyword>
<keyword id="KW-0742">SOS response</keyword>
<gene>
    <name evidence="1" type="primary">recF</name>
    <name type="ordered locus">LCABL_00040</name>
</gene>
<name>RECF_LACCB</name>
<proteinExistence type="inferred from homology"/>
<feature type="chain" id="PRO_1000121126" description="DNA replication and repair protein RecF">
    <location>
        <begin position="1"/>
        <end position="371"/>
    </location>
</feature>
<feature type="binding site" evidence="1">
    <location>
        <begin position="30"/>
        <end position="37"/>
    </location>
    <ligand>
        <name>ATP</name>
        <dbReference type="ChEBI" id="CHEBI:30616"/>
    </ligand>
</feature>
<protein>
    <recommendedName>
        <fullName evidence="1">DNA replication and repair protein RecF</fullName>
    </recommendedName>
</protein>